<protein>
    <recommendedName>
        <fullName>Ribosome hibernation promoting factor</fullName>
        <shortName>HPF</shortName>
    </recommendedName>
    <alternativeName>
        <fullName>Hibernation factor HPF</fullName>
    </alternativeName>
</protein>
<keyword id="KW-1185">Reference proteome</keyword>
<keyword id="KW-0810">Translation regulation</keyword>
<comment type="function">
    <text evidence="2">During stationary phase, promotes and stabilizes dimerization of 70S ribosomes by the ribosome modulation factor (RMF), leading to the formation of inactive 100S ribosomes.</text>
</comment>
<comment type="subunit">
    <text evidence="2">Associates exclusively with 100S ribosomes, which are dimers of 70S ribosomes.</text>
</comment>
<comment type="induction">
    <text evidence="1">Induced during stationary growth phase.</text>
</comment>
<comment type="similarity">
    <text evidence="3">Belongs to the HPF/YfiA ribosome-associated protein family. Short HPF subfamily.</text>
</comment>
<proteinExistence type="inferred from homology"/>
<accession>P0AFX1</accession>
<accession>P31221</accession>
<evidence type="ECO:0000250" key="1"/>
<evidence type="ECO:0000250" key="2">
    <source>
        <dbReference type="UniProtKB" id="P0AFX0"/>
    </source>
</evidence>
<evidence type="ECO:0000305" key="3"/>
<organism>
    <name type="scientific">Escherichia coli O6:H1 (strain CFT073 / ATCC 700928 / UPEC)</name>
    <dbReference type="NCBI Taxonomy" id="199310"/>
    <lineage>
        <taxon>Bacteria</taxon>
        <taxon>Pseudomonadati</taxon>
        <taxon>Pseudomonadota</taxon>
        <taxon>Gammaproteobacteria</taxon>
        <taxon>Enterobacterales</taxon>
        <taxon>Enterobacteriaceae</taxon>
        <taxon>Escherichia</taxon>
    </lineage>
</organism>
<name>HPF_ECOL6</name>
<gene>
    <name type="primary">hpf</name>
    <name type="ordered locus">c3963</name>
</gene>
<sequence>MQLNITGNNVEITEALREFVTAKFAKLEQYFDRINQVYVVLKVEKVTHTSDATLHVNGGEIHASAEGQDMYAAIDGLIDKLARQLTKHKDKLKQH</sequence>
<dbReference type="EMBL" id="AE014075">
    <property type="protein sequence ID" value="AAN82403.1"/>
    <property type="molecule type" value="Genomic_DNA"/>
</dbReference>
<dbReference type="RefSeq" id="WP_001176599.1">
    <property type="nucleotide sequence ID" value="NZ_CP051263.1"/>
</dbReference>
<dbReference type="BMRB" id="P0AFX1"/>
<dbReference type="SMR" id="P0AFX1"/>
<dbReference type="STRING" id="199310.c3963"/>
<dbReference type="GeneID" id="93778778"/>
<dbReference type="KEGG" id="ecc:c3963"/>
<dbReference type="eggNOG" id="COG1544">
    <property type="taxonomic scope" value="Bacteria"/>
</dbReference>
<dbReference type="HOGENOM" id="CLU_071472_3_1_6"/>
<dbReference type="BioCyc" id="ECOL199310:C3963-MONOMER"/>
<dbReference type="Proteomes" id="UP000001410">
    <property type="component" value="Chromosome"/>
</dbReference>
<dbReference type="GO" id="GO:0022627">
    <property type="term" value="C:cytosolic small ribosomal subunit"/>
    <property type="evidence" value="ECO:0007669"/>
    <property type="project" value="TreeGrafter"/>
</dbReference>
<dbReference type="GO" id="GO:0043024">
    <property type="term" value="F:ribosomal small subunit binding"/>
    <property type="evidence" value="ECO:0007669"/>
    <property type="project" value="TreeGrafter"/>
</dbReference>
<dbReference type="GO" id="GO:0045900">
    <property type="term" value="P:negative regulation of translational elongation"/>
    <property type="evidence" value="ECO:0007669"/>
    <property type="project" value="TreeGrafter"/>
</dbReference>
<dbReference type="CDD" id="cd00552">
    <property type="entry name" value="RaiA"/>
    <property type="match status" value="1"/>
</dbReference>
<dbReference type="FunFam" id="3.30.160.100:FF:000001">
    <property type="entry name" value="Ribosome hibernation promoting factor"/>
    <property type="match status" value="1"/>
</dbReference>
<dbReference type="Gene3D" id="3.30.160.100">
    <property type="entry name" value="Ribosome hibernation promotion factor-like"/>
    <property type="match status" value="1"/>
</dbReference>
<dbReference type="InterPro" id="IPR050574">
    <property type="entry name" value="HPF/YfiA_ribosome-assoc"/>
</dbReference>
<dbReference type="InterPro" id="IPR036567">
    <property type="entry name" value="RHF-like"/>
</dbReference>
<dbReference type="InterPro" id="IPR003489">
    <property type="entry name" value="RHF/RaiA"/>
</dbReference>
<dbReference type="NCBIfam" id="NF007780">
    <property type="entry name" value="PRK10470.1"/>
    <property type="match status" value="1"/>
</dbReference>
<dbReference type="NCBIfam" id="TIGR00741">
    <property type="entry name" value="yfiA"/>
    <property type="match status" value="1"/>
</dbReference>
<dbReference type="PANTHER" id="PTHR33231">
    <property type="entry name" value="30S RIBOSOMAL PROTEIN"/>
    <property type="match status" value="1"/>
</dbReference>
<dbReference type="PANTHER" id="PTHR33231:SF1">
    <property type="entry name" value="30S RIBOSOMAL PROTEIN"/>
    <property type="match status" value="1"/>
</dbReference>
<dbReference type="Pfam" id="PF02482">
    <property type="entry name" value="Ribosomal_S30AE"/>
    <property type="match status" value="1"/>
</dbReference>
<dbReference type="SUPFAM" id="SSF69754">
    <property type="entry name" value="Ribosome binding protein Y (YfiA homologue)"/>
    <property type="match status" value="1"/>
</dbReference>
<feature type="chain" id="PRO_0000097418" description="Ribosome hibernation promoting factor">
    <location>
        <begin position="1"/>
        <end position="95"/>
    </location>
</feature>
<reference key="1">
    <citation type="journal article" date="2002" name="Proc. Natl. Acad. Sci. U.S.A.">
        <title>Extensive mosaic structure revealed by the complete genome sequence of uropathogenic Escherichia coli.</title>
        <authorList>
            <person name="Welch R.A."/>
            <person name="Burland V."/>
            <person name="Plunkett G. III"/>
            <person name="Redford P."/>
            <person name="Roesch P."/>
            <person name="Rasko D."/>
            <person name="Buckles E.L."/>
            <person name="Liou S.-R."/>
            <person name="Boutin A."/>
            <person name="Hackett J."/>
            <person name="Stroud D."/>
            <person name="Mayhew G.F."/>
            <person name="Rose D.J."/>
            <person name="Zhou S."/>
            <person name="Schwartz D.C."/>
            <person name="Perna N.T."/>
            <person name="Mobley H.L.T."/>
            <person name="Donnenberg M.S."/>
            <person name="Blattner F.R."/>
        </authorList>
    </citation>
    <scope>NUCLEOTIDE SEQUENCE [LARGE SCALE GENOMIC DNA]</scope>
    <source>
        <strain>CFT073 / ATCC 700928 / UPEC</strain>
    </source>
</reference>